<keyword id="KW-0687">Ribonucleoprotein</keyword>
<keyword id="KW-0689">Ribosomal protein</keyword>
<evidence type="ECO:0000255" key="1">
    <source>
        <dbReference type="HAMAP-Rule" id="MF_00291"/>
    </source>
</evidence>
<evidence type="ECO:0000305" key="2"/>
<name>RS2_CLOBA</name>
<comment type="similarity">
    <text evidence="1">Belongs to the universal ribosomal protein uS2 family.</text>
</comment>
<gene>
    <name evidence="1" type="primary">rpsB</name>
    <name type="ordered locus">CLH_1209</name>
</gene>
<accession>B2V4F4</accession>
<proteinExistence type="inferred from homology"/>
<reference key="1">
    <citation type="submission" date="2008-05" db="EMBL/GenBank/DDBJ databases">
        <title>Complete genome sequence of Clostridium botulinum E3 str. Alaska E43.</title>
        <authorList>
            <person name="Brinkac L.M."/>
            <person name="Brown J.L."/>
            <person name="Bruce D."/>
            <person name="Detter C."/>
            <person name="Munk C."/>
            <person name="Smith L.A."/>
            <person name="Smith T.J."/>
            <person name="Sutton G."/>
            <person name="Brettin T.S."/>
        </authorList>
    </citation>
    <scope>NUCLEOTIDE SEQUENCE [LARGE SCALE GENOMIC DNA]</scope>
    <source>
        <strain>Alaska E43 / Type E3</strain>
    </source>
</reference>
<sequence length="233" mass="26352">MSVISMKQLLEAGVHFGHQTRRWNPKMAPYIFTERNGIYIIDLQKTVRKAEEAYNFIKEVSTEGKDILFVGTKKQAQDAIKDEAIRSSMHFVNNRWLGGMLTNFSTIKKRIRRLSEIERMQEDGTFEVLPKKEVIKLKGELEKLEKNLGGIKNLDCDNIGAMFVVDPRKEKNAISEAKILGIPVVAIVDTNCDPEEVDYVIPGNDDAIRAVKLITAKMADAIMEGRQGEELAE</sequence>
<organism>
    <name type="scientific">Clostridium botulinum (strain Alaska E43 / Type E3)</name>
    <dbReference type="NCBI Taxonomy" id="508767"/>
    <lineage>
        <taxon>Bacteria</taxon>
        <taxon>Bacillati</taxon>
        <taxon>Bacillota</taxon>
        <taxon>Clostridia</taxon>
        <taxon>Eubacteriales</taxon>
        <taxon>Clostridiaceae</taxon>
        <taxon>Clostridium</taxon>
    </lineage>
</organism>
<dbReference type="EMBL" id="CP001078">
    <property type="protein sequence ID" value="ACD52196.1"/>
    <property type="molecule type" value="Genomic_DNA"/>
</dbReference>
<dbReference type="RefSeq" id="WP_003374170.1">
    <property type="nucleotide sequence ID" value="NC_010723.1"/>
</dbReference>
<dbReference type="SMR" id="B2V4F4"/>
<dbReference type="KEGG" id="cbt:CLH_1209"/>
<dbReference type="HOGENOM" id="CLU_040318_1_2_9"/>
<dbReference type="GO" id="GO:0022627">
    <property type="term" value="C:cytosolic small ribosomal subunit"/>
    <property type="evidence" value="ECO:0007669"/>
    <property type="project" value="TreeGrafter"/>
</dbReference>
<dbReference type="GO" id="GO:0003735">
    <property type="term" value="F:structural constituent of ribosome"/>
    <property type="evidence" value="ECO:0007669"/>
    <property type="project" value="InterPro"/>
</dbReference>
<dbReference type="GO" id="GO:0006412">
    <property type="term" value="P:translation"/>
    <property type="evidence" value="ECO:0007669"/>
    <property type="project" value="UniProtKB-UniRule"/>
</dbReference>
<dbReference type="CDD" id="cd01425">
    <property type="entry name" value="RPS2"/>
    <property type="match status" value="1"/>
</dbReference>
<dbReference type="FunFam" id="1.10.287.610:FF:000001">
    <property type="entry name" value="30S ribosomal protein S2"/>
    <property type="match status" value="1"/>
</dbReference>
<dbReference type="Gene3D" id="3.40.50.10490">
    <property type="entry name" value="Glucose-6-phosphate isomerase like protein, domain 1"/>
    <property type="match status" value="1"/>
</dbReference>
<dbReference type="Gene3D" id="1.10.287.610">
    <property type="entry name" value="Helix hairpin bin"/>
    <property type="match status" value="1"/>
</dbReference>
<dbReference type="HAMAP" id="MF_00291_B">
    <property type="entry name" value="Ribosomal_uS2_B"/>
    <property type="match status" value="1"/>
</dbReference>
<dbReference type="InterPro" id="IPR001865">
    <property type="entry name" value="Ribosomal_uS2"/>
</dbReference>
<dbReference type="InterPro" id="IPR005706">
    <property type="entry name" value="Ribosomal_uS2_bac/mit/plastid"/>
</dbReference>
<dbReference type="InterPro" id="IPR018130">
    <property type="entry name" value="Ribosomal_uS2_CS"/>
</dbReference>
<dbReference type="InterPro" id="IPR023591">
    <property type="entry name" value="Ribosomal_uS2_flav_dom_sf"/>
</dbReference>
<dbReference type="NCBIfam" id="TIGR01011">
    <property type="entry name" value="rpsB_bact"/>
    <property type="match status" value="1"/>
</dbReference>
<dbReference type="PANTHER" id="PTHR12534">
    <property type="entry name" value="30S RIBOSOMAL PROTEIN S2 PROKARYOTIC AND ORGANELLAR"/>
    <property type="match status" value="1"/>
</dbReference>
<dbReference type="PANTHER" id="PTHR12534:SF0">
    <property type="entry name" value="SMALL RIBOSOMAL SUBUNIT PROTEIN US2M"/>
    <property type="match status" value="1"/>
</dbReference>
<dbReference type="Pfam" id="PF00318">
    <property type="entry name" value="Ribosomal_S2"/>
    <property type="match status" value="1"/>
</dbReference>
<dbReference type="PRINTS" id="PR00395">
    <property type="entry name" value="RIBOSOMALS2"/>
</dbReference>
<dbReference type="SUPFAM" id="SSF52313">
    <property type="entry name" value="Ribosomal protein S2"/>
    <property type="match status" value="1"/>
</dbReference>
<dbReference type="PROSITE" id="PS00962">
    <property type="entry name" value="RIBOSOMAL_S2_1"/>
    <property type="match status" value="1"/>
</dbReference>
<feature type="chain" id="PRO_1000115005" description="Small ribosomal subunit protein uS2">
    <location>
        <begin position="1"/>
        <end position="233"/>
    </location>
</feature>
<protein>
    <recommendedName>
        <fullName evidence="1">Small ribosomal subunit protein uS2</fullName>
    </recommendedName>
    <alternativeName>
        <fullName evidence="2">30S ribosomal protein S2</fullName>
    </alternativeName>
</protein>